<accession>O24769</accession>
<gene>
    <name evidence="6" type="primary">oxsA</name>
</gene>
<protein>
    <recommendedName>
        <fullName evidence="5">4'-phosphooxetanocin A phosphatase</fullName>
        <ecNumber evidence="1 2">3.1.3.112</ecNumber>
    </recommendedName>
    <alternativeName>
        <fullName evidence="4">HD-domain phosphohydrolase OxsA</fullName>
    </alternativeName>
</protein>
<comment type="function">
    <text evidence="1 2">Phosphohydrolase involved in the biosynthesis of oxetanocin A (OXT-A), a nucleoside analog with antitumor, antiviral and antibacterial properties (PubMed:27849620, PubMed:28346939). Catalyzes the hydrolysis of phosphooxetanocin A (OXT-A-P) to generate oxetanocin A (OXT-A) and a molecule of inorganic phosphate (PubMed:27849620, PubMed:28346939). Can also bind and hydrolyze OXT triphosphate (OXT-A-PPP) and OXT diphosphate (OXT-A-PP), and thus catalyze the sequential hydrolysis of tri-, di- and mono-phosphorylated oxetanocin A compounds, releasing one molecule of inorganic phosphate at a time (PubMed:27849620). In vitro can also use dATP, dAMP and dADP (PubMed:27849620).</text>
</comment>
<comment type="catalytic activity">
    <reaction evidence="1 2">
        <text>4'-phosphooxetanocin A + H2O = oxetanocin A + phosphate</text>
        <dbReference type="Rhea" id="RHEA:81367"/>
        <dbReference type="ChEBI" id="CHEBI:15377"/>
        <dbReference type="ChEBI" id="CHEBI:43474"/>
        <dbReference type="ChEBI" id="CHEBI:85720"/>
        <dbReference type="ChEBI" id="CHEBI:86012"/>
        <dbReference type="EC" id="3.1.3.112"/>
    </reaction>
    <physiologicalReaction direction="left-to-right" evidence="1 2">
        <dbReference type="Rhea" id="RHEA:81368"/>
    </physiologicalReaction>
</comment>
<comment type="cofactor">
    <cofactor evidence="1">
        <name>Mg(2+)</name>
        <dbReference type="ChEBI" id="CHEBI:18420"/>
    </cofactor>
    <cofactor evidence="1">
        <name>Co(2+)</name>
        <dbReference type="ChEBI" id="CHEBI:48828"/>
    </cofactor>
    <cofactor evidence="1">
        <name>Mn(2+)</name>
        <dbReference type="ChEBI" id="CHEBI:29035"/>
    </cofactor>
    <text evidence="1">Is most active with Co(2+) (PubMed:27849620). Shows lower level of activity with Mn(2+), and weaker activity with Mg(2+) or Zn(2+) (PubMed:27849620). However, Mg(2+) and not Co(2+) is probably the relevant metal in vivo (PubMed:27849620). The metal content of the active site is modulated through substrate binding (PubMed:27849620). A dinuclear metal center is observed in OxsA-OXT-A-PPP and OxsA-OXT-A-PP complexes, while a mononuclear metal center is observed in OxsA-OXT-A-P and OxsA-OXT-A structures (PubMed:27849620).</text>
</comment>
<comment type="biophysicochemical properties">
    <kinetics>
        <KM evidence="1">11 uM for OXT-A-P</KM>
        <KM evidence="1">13 uM for OXT-A-PP</KM>
        <KM evidence="1">8 uM for OXT-A-PPP</KM>
        <KM evidence="1">22 uM for dAMP</KM>
        <KM evidence="1">53 uM for dADP</KM>
        <KM evidence="1">155 uM for dATP</KM>
        <Vmax evidence="1">0.0032 umol/min/mg enzyme with OXT-A-P as substrate</Vmax>
        <Vmax evidence="1">0.0078 umol/min/mg enzyme with OXT-A-PP as substrate</Vmax>
        <Vmax evidence="1">0.012 umol/min/mg enzyme with OXT-A-PPP as substrate</Vmax>
        <Vmax evidence="1">0.0098 umol/min/mg enzyme with dAMP as substrate</Vmax>
        <Vmax evidence="1">0.0071 umol/min/mg enzyme with dADP as substrate</Vmax>
        <Vmax evidence="1">0.058 umol/min/mg enzyme with dATP as substrate</Vmax>
        <text evidence="1">kcat is 0.0012 sec(-1) with OXT-A-P as substrate. kcat is 0.0029 sec(-1) with OXT-A-PP as substrate. kcat is 0.0045 sec(-1) with OXT-A-PPP as substrate. kcat is 0.0037 sec(-1) with dAMP as substrate. kcat is 0.0026 sec(-1) with dADP as substrate. kcat is 0.022 sec(-1) with dATP as substrate.</text>
    </kinetics>
</comment>
<comment type="subunit">
    <text evidence="1">Homodimer.</text>
</comment>
<comment type="domain">
    <text evidence="1">Has a mononuclear HD domain phosphohydrolase fold.</text>
</comment>
<comment type="similarity">
    <text evidence="5">Belongs to the 5DNU family.</text>
</comment>
<sequence length="194" mass="22680">MSSLLDIIYQLRQVPRWDGSFQFEKEDVSQHSFSVIAISHILCELKETLEGKKINKEKLLLYALYHDVTEVVSTHIISPVKKNSILKDPFNAFREQIKNSLFDNLPITLSDTLSTILNNNDLEIQEIVEHADHVDAYCKSCIEVHRGNKDFISIQRSLGDKLDNLTKEYPYLKEFQNLFLKDFPLENKNYRYLN</sequence>
<geneLocation type="plasmid" evidence="3">
    <name>pOXT1</name>
</geneLocation>
<keyword id="KW-0002">3D-structure</keyword>
<keyword id="KW-0170">Cobalt</keyword>
<keyword id="KW-0378">Hydrolase</keyword>
<keyword id="KW-0460">Magnesium</keyword>
<keyword id="KW-0464">Manganese</keyword>
<keyword id="KW-0479">Metal-binding</keyword>
<keyword id="KW-0614">Plasmid</keyword>
<dbReference type="EC" id="3.1.3.112" evidence="1 2"/>
<dbReference type="EMBL" id="AB005787">
    <property type="protein sequence ID" value="BAA21630.1"/>
    <property type="molecule type" value="Genomic_DNA"/>
</dbReference>
<dbReference type="PIR" id="T00030">
    <property type="entry name" value="T00030"/>
</dbReference>
<dbReference type="PDB" id="5TK6">
    <property type="method" value="X-ray"/>
    <property type="resolution" value="1.92 A"/>
    <property type="chains" value="A=1-194"/>
</dbReference>
<dbReference type="PDB" id="5TK7">
    <property type="method" value="X-ray"/>
    <property type="resolution" value="1.90 A"/>
    <property type="chains" value="A=1-194"/>
</dbReference>
<dbReference type="PDB" id="5TK8">
    <property type="method" value="X-ray"/>
    <property type="resolution" value="1.64 A"/>
    <property type="chains" value="A=1-194"/>
</dbReference>
<dbReference type="PDB" id="5TK9">
    <property type="method" value="X-ray"/>
    <property type="resolution" value="1.84 A"/>
    <property type="chains" value="A=1-194"/>
</dbReference>
<dbReference type="PDB" id="5TKA">
    <property type="method" value="X-ray"/>
    <property type="resolution" value="2.05 A"/>
    <property type="chains" value="A=1-194"/>
</dbReference>
<dbReference type="PDBsum" id="5TK6"/>
<dbReference type="PDBsum" id="5TK7"/>
<dbReference type="PDBsum" id="5TK8"/>
<dbReference type="PDBsum" id="5TK9"/>
<dbReference type="PDBsum" id="5TKA"/>
<dbReference type="SMR" id="O24769"/>
<dbReference type="KEGG" id="ag:BAA21630"/>
<dbReference type="GO" id="GO:0016787">
    <property type="term" value="F:hydrolase activity"/>
    <property type="evidence" value="ECO:0007669"/>
    <property type="project" value="UniProtKB-KW"/>
</dbReference>
<dbReference type="GO" id="GO:0046872">
    <property type="term" value="F:metal ion binding"/>
    <property type="evidence" value="ECO:0007669"/>
    <property type="project" value="UniProtKB-KW"/>
</dbReference>
<dbReference type="CDD" id="cd00077">
    <property type="entry name" value="HDc"/>
    <property type="match status" value="1"/>
</dbReference>
<dbReference type="Gene3D" id="1.10.3210.10">
    <property type="entry name" value="Hypothetical protein af1432"/>
    <property type="match status" value="1"/>
</dbReference>
<dbReference type="InterPro" id="IPR003607">
    <property type="entry name" value="HD/PDEase_dom"/>
</dbReference>
<dbReference type="Pfam" id="PF12917">
    <property type="entry name" value="YfbR-like"/>
    <property type="match status" value="1"/>
</dbReference>
<dbReference type="SMART" id="SM00471">
    <property type="entry name" value="HDc"/>
    <property type="match status" value="1"/>
</dbReference>
<dbReference type="SUPFAM" id="SSF109604">
    <property type="entry name" value="HD-domain/PDEase-like"/>
    <property type="match status" value="1"/>
</dbReference>
<reference key="1">
    <citation type="journal article" date="1999" name="Biosci. Biotechnol. Biochem.">
        <title>Cloning of oxetanocin A biosynthetic and resistance genes that reside on a plasmid of Bacillus megaterium strain NK84-0128.</title>
        <authorList>
            <person name="Morita M."/>
            <person name="Tomita K."/>
            <person name="Ishizawa M."/>
            <person name="Takagi K."/>
            <person name="Kawamura F."/>
            <person name="Takahashi H."/>
            <person name="Morino T."/>
        </authorList>
    </citation>
    <scope>NUCLEOTIDE SEQUENCE [GENOMIC DNA]</scope>
    <source>
        <strain>NK84-0128</strain>
        <plasmid>pOXT1</plasmid>
    </source>
</reference>
<reference key="2">
    <citation type="journal article" date="2017" name="Nature">
        <title>A B12-dependent radical SAM enzyme involved in oxetanocin A biosynthesis.</title>
        <authorList>
            <person name="Bridwell-Rabb J."/>
            <person name="Zhong A."/>
            <person name="Sun H.G."/>
            <person name="Drennan C.L."/>
            <person name="Liu H.W."/>
        </authorList>
    </citation>
    <scope>FUNCTION</scope>
    <scope>CATALYTIC ACTIVITY</scope>
</reference>
<reference evidence="7 8 9 10 11" key="3">
    <citation type="journal article" date="2016" name="Proc. Natl. Acad. Sci. U.S.A.">
        <title>An HD domain phosphohydrolase active site tailored for oxetanocin-A biosynthesis.</title>
        <authorList>
            <person name="Bridwell-Rabb J."/>
            <person name="Kang G."/>
            <person name="Zhong A."/>
            <person name="Liu H.W."/>
            <person name="Drennan C.L."/>
        </authorList>
    </citation>
    <scope>X-RAY CRYSTALLOGRAPHY (1.64 ANGSTROMS) IN COMPLEXES WITH MAGNESIUM; OXETANOCIN A; OXETANOCIN A MONOPHOSPHATE; OXETANOCIN A DIPHOSPHATE AND OXETANOCIN A TRIPHOSPHATE</scope>
    <scope>FUNCTION</scope>
    <scope>CATALYTIC ACTIVITY</scope>
    <scope>COFACTOR</scope>
    <scope>BIOPHYSICOCHEMICAL PROPERTIES</scope>
    <scope>SUBUNIT</scope>
    <scope>DOMAIN</scope>
</reference>
<evidence type="ECO:0000269" key="1">
    <source>
    </source>
</evidence>
<evidence type="ECO:0000269" key="2">
    <source>
    </source>
</evidence>
<evidence type="ECO:0000303" key="3">
    <source>
    </source>
</evidence>
<evidence type="ECO:0000303" key="4">
    <source>
    </source>
</evidence>
<evidence type="ECO:0000305" key="5"/>
<evidence type="ECO:0000312" key="6">
    <source>
        <dbReference type="EMBL" id="BAA21630.1"/>
    </source>
</evidence>
<evidence type="ECO:0007744" key="7">
    <source>
        <dbReference type="PDB" id="5TK6"/>
    </source>
</evidence>
<evidence type="ECO:0007744" key="8">
    <source>
        <dbReference type="PDB" id="5TK7"/>
    </source>
</evidence>
<evidence type="ECO:0007744" key="9">
    <source>
        <dbReference type="PDB" id="5TK8"/>
    </source>
</evidence>
<evidence type="ECO:0007744" key="10">
    <source>
        <dbReference type="PDB" id="5TK9"/>
    </source>
</evidence>
<evidence type="ECO:0007744" key="11">
    <source>
        <dbReference type="PDB" id="5TKA"/>
    </source>
</evidence>
<evidence type="ECO:0007829" key="12">
    <source>
        <dbReference type="PDB" id="5TK6"/>
    </source>
</evidence>
<evidence type="ECO:0007829" key="13">
    <source>
        <dbReference type="PDB" id="5TK8"/>
    </source>
</evidence>
<feature type="chain" id="PRO_0000461607" description="4'-phosphooxetanocin A phosphatase">
    <location>
        <begin position="1"/>
        <end position="194"/>
    </location>
</feature>
<feature type="binding site" evidence="9">
    <location>
        <position position="16"/>
    </location>
    <ligand>
        <name>4'-phosphooxetanocin A</name>
        <dbReference type="ChEBI" id="CHEBI:85720"/>
    </ligand>
</feature>
<feature type="binding site" evidence="9">
    <location>
        <position position="17"/>
    </location>
    <ligand>
        <name>4'-phosphooxetanocin A</name>
        <dbReference type="ChEBI" id="CHEBI:85720"/>
    </ligand>
</feature>
<feature type="binding site" evidence="10">
    <location>
        <position position="17"/>
    </location>
    <ligand>
        <name>oxetanocin A</name>
        <dbReference type="ChEBI" id="CHEBI:86012"/>
    </ligand>
</feature>
<feature type="binding site" evidence="8 9 10 11">
    <location>
        <position position="31"/>
    </location>
    <ligand>
        <name>Mg(2+)</name>
        <dbReference type="ChEBI" id="CHEBI:18420"/>
    </ligand>
</feature>
<feature type="binding site" evidence="8 9 10 11">
    <location>
        <position position="66"/>
    </location>
    <ligand>
        <name>Mg(2+)</name>
        <dbReference type="ChEBI" id="CHEBI:18420"/>
    </ligand>
</feature>
<feature type="binding site" evidence="8 9 10 11">
    <location>
        <position position="67"/>
    </location>
    <ligand>
        <name>Mg(2+)</name>
        <dbReference type="ChEBI" id="CHEBI:18420"/>
    </ligand>
</feature>
<feature type="binding site" evidence="9">
    <location>
        <position position="75"/>
    </location>
    <ligand>
        <name>4'-phosphooxetanocin A</name>
        <dbReference type="ChEBI" id="CHEBI:85720"/>
    </ligand>
</feature>
<feature type="binding site" evidence="10">
    <location>
        <position position="75"/>
    </location>
    <ligand>
        <name>oxetanocin A</name>
        <dbReference type="ChEBI" id="CHEBI:86012"/>
    </ligand>
</feature>
<feature type="binding site" evidence="9">
    <location>
        <position position="78"/>
    </location>
    <ligand>
        <name>4'-phosphooxetanocin A</name>
        <dbReference type="ChEBI" id="CHEBI:85720"/>
    </ligand>
</feature>
<feature type="binding site" evidence="10">
    <location>
        <position position="78"/>
    </location>
    <ligand>
        <name>oxetanocin A</name>
        <dbReference type="ChEBI" id="CHEBI:86012"/>
    </ligand>
</feature>
<feature type="binding site" evidence="9">
    <location>
        <position position="81"/>
    </location>
    <ligand>
        <name>4'-phosphooxetanocin A</name>
        <dbReference type="ChEBI" id="CHEBI:85720"/>
    </ligand>
</feature>
<feature type="binding site" evidence="8 9 10 11">
    <location>
        <position position="132"/>
    </location>
    <ligand>
        <name>Mg(2+)</name>
        <dbReference type="ChEBI" id="CHEBI:18420"/>
    </ligand>
</feature>
<feature type="helix" evidence="13">
    <location>
        <begin position="4"/>
        <end position="10"/>
    </location>
</feature>
<feature type="helix" evidence="13">
    <location>
        <begin position="11"/>
        <end position="13"/>
    </location>
</feature>
<feature type="strand" evidence="13">
    <location>
        <begin position="15"/>
        <end position="17"/>
    </location>
</feature>
<feature type="helix" evidence="13">
    <location>
        <begin position="28"/>
        <end position="50"/>
    </location>
</feature>
<feature type="helix" evidence="13">
    <location>
        <begin position="56"/>
        <end position="65"/>
    </location>
</feature>
<feature type="turn" evidence="13">
    <location>
        <begin position="66"/>
        <end position="69"/>
    </location>
</feature>
<feature type="helix" evidence="13">
    <location>
        <begin position="70"/>
        <end position="73"/>
    </location>
</feature>
<feature type="helix" evidence="13">
    <location>
        <begin position="78"/>
        <end position="81"/>
    </location>
</feature>
<feature type="turn" evidence="13">
    <location>
        <begin position="84"/>
        <end position="86"/>
    </location>
</feature>
<feature type="helix" evidence="13">
    <location>
        <begin position="87"/>
        <end position="100"/>
    </location>
</feature>
<feature type="helix" evidence="13">
    <location>
        <begin position="107"/>
        <end position="117"/>
    </location>
</feature>
<feature type="helix" evidence="13">
    <location>
        <begin position="122"/>
        <end position="146"/>
    </location>
</feature>
<feature type="helix" evidence="13">
    <location>
        <begin position="149"/>
        <end position="151"/>
    </location>
</feature>
<feature type="helix" evidence="13">
    <location>
        <begin position="152"/>
        <end position="166"/>
    </location>
</feature>
<feature type="helix" evidence="13">
    <location>
        <begin position="170"/>
        <end position="179"/>
    </location>
</feature>
<feature type="strand" evidence="12">
    <location>
        <begin position="180"/>
        <end position="182"/>
    </location>
</feature>
<feature type="helix" evidence="13">
    <location>
        <begin position="189"/>
        <end position="191"/>
    </location>
</feature>
<name>OXSA_PRIMG</name>
<organism>
    <name type="scientific">Priestia megaterium</name>
    <name type="common">Bacillus megaterium</name>
    <dbReference type="NCBI Taxonomy" id="1404"/>
    <lineage>
        <taxon>Bacteria</taxon>
        <taxon>Bacillati</taxon>
        <taxon>Bacillota</taxon>
        <taxon>Bacilli</taxon>
        <taxon>Bacillales</taxon>
        <taxon>Bacillaceae</taxon>
        <taxon>Priestia</taxon>
    </lineage>
</organism>
<proteinExistence type="evidence at protein level"/>